<name>APTX_SCHPO</name>
<feature type="chain" id="PRO_0000314650" description="Aprataxin-like protein">
    <location>
        <begin position="1"/>
        <end position="232"/>
    </location>
</feature>
<feature type="domain" description="HIT">
    <location>
        <begin position="38"/>
        <end position="160"/>
    </location>
</feature>
<feature type="region of interest" description="Interaction with DNA" evidence="2 3 5">
    <location>
        <begin position="63"/>
        <end position="67"/>
    </location>
</feature>
<feature type="region of interest" description="Interaction with DNA" evidence="2 3 5">
    <location>
        <begin position="138"/>
        <end position="149"/>
    </location>
</feature>
<feature type="region of interest" description="Interaction with DNA" evidence="2 3 5">
    <location>
        <begin position="161"/>
        <end position="165"/>
    </location>
</feature>
<feature type="region of interest" description="Interaction with DNA" evidence="2 3 5">
    <location>
        <begin position="209"/>
        <end position="212"/>
    </location>
</feature>
<feature type="active site" description="Nucleophile" evidence="8 9">
    <location>
        <position position="147"/>
    </location>
</feature>
<feature type="binding site" evidence="3 5 11 12 14">
    <location>
        <position position="200"/>
    </location>
    <ligand>
        <name>Zn(2+)</name>
        <dbReference type="ChEBI" id="CHEBI:29105"/>
    </ligand>
</feature>
<feature type="binding site" evidence="3 5 11 12 14">
    <location>
        <position position="203"/>
    </location>
    <ligand>
        <name>Zn(2+)</name>
        <dbReference type="ChEBI" id="CHEBI:29105"/>
    </ligand>
</feature>
<feature type="binding site" evidence="3 5 11 12 14">
    <location>
        <position position="217"/>
    </location>
    <ligand>
        <name>Zn(2+)</name>
        <dbReference type="ChEBI" id="CHEBI:29105"/>
    </ligand>
</feature>
<feature type="binding site" evidence="3 5 11 12 14">
    <location>
        <position position="221"/>
    </location>
    <ligand>
        <name>Zn(2+)</name>
        <dbReference type="ChEBI" id="CHEBI:29105"/>
    </ligand>
</feature>
<feature type="site" description="Interaction with DNA" evidence="3 5">
    <location>
        <position position="41"/>
    </location>
</feature>
<feature type="mutagenesis site" description="Decreased affinity for DNA." evidence="2">
    <original>F</original>
    <variation>A</variation>
    <location>
        <position position="34"/>
    </location>
</feature>
<feature type="mutagenesis site" description="Mildly decreased DNAppG decapping activity." evidence="5">
    <original>Y</original>
    <variation>A</variation>
    <location>
        <position position="41"/>
    </location>
</feature>
<feature type="mutagenesis site" description="Strongly decreased DNAppG decapping activity." evidence="5">
    <original>D</original>
    <variation>A</variation>
    <location>
        <position position="63"/>
    </location>
</feature>
<feature type="mutagenesis site" description="Nearly abolishes enzyme activity." evidence="3">
    <original>F</original>
    <variation>A</variation>
    <location>
        <position position="65"/>
    </location>
</feature>
<feature type="mutagenesis site" description="Loss of enzyme activity. Strongly reduced affinity for DNA." evidence="3">
    <original>K</original>
    <variation>E</variation>
    <location>
        <position position="67"/>
    </location>
</feature>
<feature type="mutagenesis site" description="Decreased affinity for DNA." evidence="2">
    <original>C</original>
    <variation>A</variation>
    <location>
        <position position="130"/>
    </location>
</feature>
<feature type="mutagenesis site" description="Decreased enzyme activity. Mildly decreases affinity for DNA." evidence="2 3">
    <original>H</original>
    <variation>A</variation>
    <location>
        <position position="138"/>
    </location>
</feature>
<feature type="mutagenesis site" description="Nearly abolishes enzyme activity. Mildly decreases affinity for DNA." evidence="2 3">
    <original>S</original>
    <variation>A</variation>
    <variation>E</variation>
    <location>
        <position position="142"/>
    </location>
</feature>
<feature type="mutagenesis site" description="Loss of enzyme activity." evidence="5">
    <original>H</original>
    <variation>A</variation>
    <location>
        <position position="147"/>
    </location>
</feature>
<feature type="mutagenesis site" description="Loss of enzyme activity." evidence="3">
    <original>H</original>
    <variation>N</variation>
    <location>
        <position position="147"/>
    </location>
</feature>
<feature type="mutagenesis site" description="Nearly abolishes enzyme activity." evidence="5">
    <original>H</original>
    <variation>A</variation>
    <location>
        <position position="149"/>
    </location>
</feature>
<feature type="mutagenesis site" description="Strongly decreases abolishes enzyme activity. Decreased affinity for DNA." evidence="2 3">
    <original>K</original>
    <variation>A</variation>
    <location>
        <position position="161"/>
    </location>
</feature>
<feature type="mutagenesis site" description="Nearly abolishes enzyme activity. Strongly reduced affinity for DNA." evidence="3">
    <original>K</original>
    <variation>E</variation>
    <location>
        <position position="161"/>
    </location>
</feature>
<feature type="mutagenesis site" description="Slightly decreased enzyme activity." evidence="3">
    <original>H</original>
    <variation>A</variation>
    <location>
        <position position="165"/>
    </location>
</feature>
<feature type="mutagenesis site" description="Nearly abolishes enzyme activity. Strongly reduced affinity for DNA." evidence="3">
    <original>H</original>
    <variation>E</variation>
    <location>
        <position position="165"/>
    </location>
</feature>
<feature type="mutagenesis site" description="Decreased enzyme activity." evidence="3">
    <original>S</original>
    <variation>A</variation>
    <location>
        <position position="168"/>
    </location>
</feature>
<feature type="helix" evidence="17">
    <location>
        <begin position="34"/>
        <end position="38"/>
    </location>
</feature>
<feature type="helix" evidence="17">
    <location>
        <begin position="39"/>
        <end position="43"/>
    </location>
</feature>
<feature type="helix" evidence="17">
    <location>
        <begin position="45"/>
        <end position="47"/>
    </location>
</feature>
<feature type="strand" evidence="17">
    <location>
        <begin position="51"/>
        <end position="54"/>
    </location>
</feature>
<feature type="strand" evidence="17">
    <location>
        <begin position="56"/>
        <end position="62"/>
    </location>
</feature>
<feature type="strand" evidence="17">
    <location>
        <begin position="67"/>
        <end position="76"/>
    </location>
</feature>
<feature type="turn" evidence="17">
    <location>
        <begin position="79"/>
        <end position="83"/>
    </location>
</feature>
<feature type="helix" evidence="17">
    <location>
        <begin position="86"/>
        <end position="92"/>
    </location>
</feature>
<feature type="helix" evidence="17">
    <location>
        <begin position="94"/>
        <end position="105"/>
    </location>
</feature>
<feature type="turn" evidence="17">
    <location>
        <begin position="106"/>
        <end position="108"/>
    </location>
</feature>
<feature type="helix" evidence="17">
    <location>
        <begin position="109"/>
        <end position="119"/>
    </location>
</feature>
<feature type="helix" evidence="17">
    <location>
        <begin position="126"/>
        <end position="130"/>
    </location>
</feature>
<feature type="strand" evidence="17">
    <location>
        <begin position="133"/>
        <end position="140"/>
    </location>
</feature>
<feature type="strand" evidence="17">
    <location>
        <begin position="142"/>
        <end position="145"/>
    </location>
</feature>
<feature type="strand" evidence="17">
    <location>
        <begin position="148"/>
        <end position="153"/>
    </location>
</feature>
<feature type="helix" evidence="17">
    <location>
        <begin position="163"/>
        <end position="169"/>
    </location>
</feature>
<feature type="strand" evidence="17">
    <location>
        <begin position="174"/>
        <end position="176"/>
    </location>
</feature>
<feature type="helix" evidence="17">
    <location>
        <begin position="181"/>
        <end position="183"/>
    </location>
</feature>
<feature type="helix" evidence="17">
    <location>
        <begin position="190"/>
        <end position="192"/>
    </location>
</feature>
<feature type="helix" evidence="18">
    <location>
        <begin position="193"/>
        <end position="195"/>
    </location>
</feature>
<feature type="turn" evidence="17">
    <location>
        <begin position="201"/>
        <end position="203"/>
    </location>
</feature>
<feature type="strand" evidence="16">
    <location>
        <begin position="206"/>
        <end position="208"/>
    </location>
</feature>
<feature type="helix" evidence="17">
    <location>
        <begin position="211"/>
        <end position="229"/>
    </location>
</feature>
<organism>
    <name type="scientific">Schizosaccharomyces pombe (strain 972 / ATCC 24843)</name>
    <name type="common">Fission yeast</name>
    <dbReference type="NCBI Taxonomy" id="284812"/>
    <lineage>
        <taxon>Eukaryota</taxon>
        <taxon>Fungi</taxon>
        <taxon>Dikarya</taxon>
        <taxon>Ascomycota</taxon>
        <taxon>Taphrinomycotina</taxon>
        <taxon>Schizosaccharomycetes</taxon>
        <taxon>Schizosaccharomycetales</taxon>
        <taxon>Schizosaccharomycetaceae</taxon>
        <taxon>Schizosaccharomyces</taxon>
    </lineage>
</organism>
<dbReference type="EC" id="3.6.1.71" evidence="3 4"/>
<dbReference type="EC" id="3.6.1.72" evidence="5"/>
<dbReference type="EMBL" id="CU329672">
    <property type="protein sequence ID" value="CAA21423.1"/>
    <property type="molecule type" value="Genomic_DNA"/>
</dbReference>
<dbReference type="PIR" id="T41152">
    <property type="entry name" value="T41152"/>
</dbReference>
<dbReference type="RefSeq" id="NP_588388.1">
    <property type="nucleotide sequence ID" value="NM_001023379.2"/>
</dbReference>
<dbReference type="PDB" id="3SP4">
    <property type="method" value="X-ray"/>
    <property type="resolution" value="1.80 A"/>
    <property type="chains" value="A/B=33-232"/>
</dbReference>
<dbReference type="PDB" id="3SPD">
    <property type="method" value="X-ray"/>
    <property type="resolution" value="1.91 A"/>
    <property type="chains" value="A/B/C/D=33-232"/>
</dbReference>
<dbReference type="PDB" id="3SPL">
    <property type="method" value="X-ray"/>
    <property type="resolution" value="2.10 A"/>
    <property type="chains" value="A/B/C/D=33-232"/>
</dbReference>
<dbReference type="PDB" id="3SZQ">
    <property type="method" value="X-ray"/>
    <property type="resolution" value="2.35 A"/>
    <property type="chains" value="A=31-232"/>
</dbReference>
<dbReference type="PDB" id="4XBA">
    <property type="method" value="X-ray"/>
    <property type="resolution" value="1.50 A"/>
    <property type="chains" value="A/B=33-232"/>
</dbReference>
<dbReference type="PDB" id="4YKL">
    <property type="method" value="X-ray"/>
    <property type="resolution" value="2.25 A"/>
    <property type="chains" value="B=33-232"/>
</dbReference>
<dbReference type="PDBsum" id="3SP4"/>
<dbReference type="PDBsum" id="3SPD"/>
<dbReference type="PDBsum" id="3SPL"/>
<dbReference type="PDBsum" id="3SZQ"/>
<dbReference type="PDBsum" id="4XBA"/>
<dbReference type="PDBsum" id="4YKL"/>
<dbReference type="SMR" id="O74859"/>
<dbReference type="BioGRID" id="275769">
    <property type="interactions" value="4"/>
</dbReference>
<dbReference type="FunCoup" id="O74859">
    <property type="interactions" value="564"/>
</dbReference>
<dbReference type="STRING" id="284812.O74859"/>
<dbReference type="iPTMnet" id="O74859"/>
<dbReference type="PaxDb" id="4896-SPCC18.09c.1"/>
<dbReference type="EnsemblFungi" id="SPCC18.09c.1">
    <property type="protein sequence ID" value="SPCC18.09c.1:pep"/>
    <property type="gene ID" value="SPCC18.09c"/>
</dbReference>
<dbReference type="GeneID" id="2539198"/>
<dbReference type="KEGG" id="spo:2539198"/>
<dbReference type="PomBase" id="SPCC18.09c">
    <property type="gene designation" value="hnt3"/>
</dbReference>
<dbReference type="VEuPathDB" id="FungiDB:SPCC18.09c"/>
<dbReference type="eggNOG" id="KOG0562">
    <property type="taxonomic scope" value="Eukaryota"/>
</dbReference>
<dbReference type="HOGENOM" id="CLU_066882_0_0_1"/>
<dbReference type="InParanoid" id="O74859"/>
<dbReference type="OMA" id="IHDMFPK"/>
<dbReference type="PhylomeDB" id="O74859"/>
<dbReference type="BRENDA" id="3.6.1.70">
    <property type="organism ID" value="5613"/>
</dbReference>
<dbReference type="BRENDA" id="3.6.1.71">
    <property type="organism ID" value="5613"/>
</dbReference>
<dbReference type="BRENDA" id="3.6.1.72">
    <property type="organism ID" value="5613"/>
</dbReference>
<dbReference type="EvolutionaryTrace" id="O74859"/>
<dbReference type="PRO" id="PR:O74859"/>
<dbReference type="Proteomes" id="UP000002485">
    <property type="component" value="Chromosome III"/>
</dbReference>
<dbReference type="GO" id="GO:0005829">
    <property type="term" value="C:cytosol"/>
    <property type="evidence" value="ECO:0007005"/>
    <property type="project" value="PomBase"/>
</dbReference>
<dbReference type="GO" id="GO:0005634">
    <property type="term" value="C:nucleus"/>
    <property type="evidence" value="ECO:0007005"/>
    <property type="project" value="PomBase"/>
</dbReference>
<dbReference type="GO" id="GO:0033699">
    <property type="term" value="F:DNA 5'-adenosine monophosphate hydrolase activity"/>
    <property type="evidence" value="ECO:0000314"/>
    <property type="project" value="PomBase"/>
</dbReference>
<dbReference type="GO" id="GO:0120108">
    <property type="term" value="F:DNA-3'-diphospho-5'-guanosine diphosphatase"/>
    <property type="evidence" value="ECO:0000314"/>
    <property type="project" value="PomBase"/>
</dbReference>
<dbReference type="GO" id="GO:0003690">
    <property type="term" value="F:double-stranded DNA binding"/>
    <property type="evidence" value="ECO:0000314"/>
    <property type="project" value="PomBase"/>
</dbReference>
<dbReference type="GO" id="GO:0003725">
    <property type="term" value="F:double-stranded RNA binding"/>
    <property type="evidence" value="ECO:0000318"/>
    <property type="project" value="GO_Central"/>
</dbReference>
<dbReference type="GO" id="GO:0019002">
    <property type="term" value="F:GMP binding"/>
    <property type="evidence" value="ECO:0000314"/>
    <property type="project" value="PomBase"/>
</dbReference>
<dbReference type="GO" id="GO:1905108">
    <property type="term" value="F:guanosine binding"/>
    <property type="evidence" value="ECO:0000314"/>
    <property type="project" value="PomBase"/>
</dbReference>
<dbReference type="GO" id="GO:0030983">
    <property type="term" value="F:mismatched DNA binding"/>
    <property type="evidence" value="ECO:0000314"/>
    <property type="project" value="PomBase"/>
</dbReference>
<dbReference type="GO" id="GO:1990165">
    <property type="term" value="F:single-strand break-containing DNA binding"/>
    <property type="evidence" value="ECO:0000314"/>
    <property type="project" value="PomBase"/>
</dbReference>
<dbReference type="GO" id="GO:0003697">
    <property type="term" value="F:single-stranded DNA binding"/>
    <property type="evidence" value="ECO:0000314"/>
    <property type="project" value="PomBase"/>
</dbReference>
<dbReference type="GO" id="GO:0008270">
    <property type="term" value="F:zinc ion binding"/>
    <property type="evidence" value="ECO:0000314"/>
    <property type="project" value="PomBase"/>
</dbReference>
<dbReference type="GO" id="GO:0006298">
    <property type="term" value="P:mismatch repair"/>
    <property type="evidence" value="ECO:0000314"/>
    <property type="project" value="PomBase"/>
</dbReference>
<dbReference type="GO" id="GO:0000012">
    <property type="term" value="P:single strand break repair"/>
    <property type="evidence" value="ECO:0000318"/>
    <property type="project" value="GO_Central"/>
</dbReference>
<dbReference type="FunFam" id="3.30.428.10:FF:000017">
    <property type="entry name" value="Aprataxin-like protein"/>
    <property type="match status" value="1"/>
</dbReference>
<dbReference type="Gene3D" id="3.30.428.10">
    <property type="entry name" value="HIT-like"/>
    <property type="match status" value="1"/>
</dbReference>
<dbReference type="InterPro" id="IPR011146">
    <property type="entry name" value="HIT-like"/>
</dbReference>
<dbReference type="InterPro" id="IPR036265">
    <property type="entry name" value="HIT-like_sf"/>
</dbReference>
<dbReference type="InterPro" id="IPR032566">
    <property type="entry name" value="Znf-C2HE"/>
</dbReference>
<dbReference type="PANTHER" id="PTHR12486:SF4">
    <property type="entry name" value="APRATAXIN"/>
    <property type="match status" value="1"/>
</dbReference>
<dbReference type="PANTHER" id="PTHR12486">
    <property type="entry name" value="APRATAXIN-RELATED"/>
    <property type="match status" value="1"/>
</dbReference>
<dbReference type="Pfam" id="PF01230">
    <property type="entry name" value="HIT"/>
    <property type="match status" value="1"/>
</dbReference>
<dbReference type="Pfam" id="PF16278">
    <property type="entry name" value="zf-C2HE"/>
    <property type="match status" value="1"/>
</dbReference>
<dbReference type="SUPFAM" id="SSF54197">
    <property type="entry name" value="HIT-like"/>
    <property type="match status" value="1"/>
</dbReference>
<evidence type="ECO:0000269" key="1">
    <source>
    </source>
</evidence>
<evidence type="ECO:0000269" key="2">
    <source>
    </source>
</evidence>
<evidence type="ECO:0000269" key="3">
    <source>
    </source>
</evidence>
<evidence type="ECO:0000269" key="4">
    <source>
    </source>
</evidence>
<evidence type="ECO:0000269" key="5">
    <source>
    </source>
</evidence>
<evidence type="ECO:0000305" key="6"/>
<evidence type="ECO:0000305" key="7">
    <source>
    </source>
</evidence>
<evidence type="ECO:0000305" key="8">
    <source>
    </source>
</evidence>
<evidence type="ECO:0000305" key="9">
    <source>
    </source>
</evidence>
<evidence type="ECO:0007744" key="10">
    <source>
        <dbReference type="PDB" id="3SP4"/>
    </source>
</evidence>
<evidence type="ECO:0007744" key="11">
    <source>
        <dbReference type="PDB" id="3SPD"/>
    </source>
</evidence>
<evidence type="ECO:0007744" key="12">
    <source>
        <dbReference type="PDB" id="3SPL"/>
    </source>
</evidence>
<evidence type="ECO:0007744" key="13">
    <source>
        <dbReference type="PDB" id="3SZQ"/>
    </source>
</evidence>
<evidence type="ECO:0007744" key="14">
    <source>
        <dbReference type="PDB" id="4XBA"/>
    </source>
</evidence>
<evidence type="ECO:0007744" key="15">
    <source>
        <dbReference type="PDB" id="4YKL"/>
    </source>
</evidence>
<evidence type="ECO:0007829" key="16">
    <source>
        <dbReference type="PDB" id="3SPD"/>
    </source>
</evidence>
<evidence type="ECO:0007829" key="17">
    <source>
        <dbReference type="PDB" id="4XBA"/>
    </source>
</evidence>
<evidence type="ECO:0007829" key="18">
    <source>
        <dbReference type="PDB" id="4YKL"/>
    </source>
</evidence>
<gene>
    <name type="primary">hnt3</name>
    <name type="ORF">SPCC18.09c</name>
</gene>
<sequence length="232" mass="26922">MSVHKTNDAFKVLMNSAKEPIVEDIPKKYRKQSFRDNLKVYIESPESYKNVIYYDDDVVLVRDMFPKSKMHLLLMTRDPHLTHVHPLEIMMKHRSLVEKLVSYVQGDLSGLIFDEARNCLSQQLTNEALCNYIKVGFHAGPSMNNLHLHIMTLDHVSPSLKNSAHYISFTSPFFVKIDTPTSNLPTRGTLTSLFQEDLKCWRCGETFGRHFTKLKAHLQEEYDDWLDKSVSM</sequence>
<keyword id="KW-0002">3D-structure</keyword>
<keyword id="KW-0963">Cytoplasm</keyword>
<keyword id="KW-0227">DNA damage</keyword>
<keyword id="KW-0234">DNA repair</keyword>
<keyword id="KW-0238">DNA-binding</keyword>
<keyword id="KW-0378">Hydrolase</keyword>
<keyword id="KW-0479">Metal-binding</keyword>
<keyword id="KW-0539">Nucleus</keyword>
<keyword id="KW-1185">Reference proteome</keyword>
<keyword id="KW-0862">Zinc</keyword>
<accession>O74859</accession>
<protein>
    <recommendedName>
        <fullName>Aprataxin-like protein</fullName>
        <ecNumber evidence="3 4">3.6.1.71</ecNumber>
        <ecNumber evidence="5">3.6.1.72</ecNumber>
    </recommendedName>
    <alternativeName>
        <fullName>Hit family protein 3</fullName>
    </alternativeName>
</protein>
<proteinExistence type="evidence at protein level"/>
<comment type="function">
    <text evidence="3 4 5 6 7">DNA-binding protein involved in single-strand DNA break repair, double-strand DNA break repair and base excision repair. Resolves abortive DNA ligation intermediates formed either at base excision sites, or when DNA ligases attempt to repair non-ligatable breaks induced by reactive oxygen species (PubMed:21984208, PubMed:24362567). Catalyzes the release of adenylate groups covalently linked to 5'-phosphate termini, resulting in the production of 5'-phosphate termini that can be efficiently rejoined (PubMed:21984210, PubMed:24362567). Likewise, catalyzes the release of 3'-linked guanosine (DNAppG) and inosine (DNAppI) from DNA, but has higher specific activity with 5'-linked adenosine (AppDNA) (PubMed:26007660).</text>
</comment>
<comment type="catalytic activity">
    <reaction evidence="3 4">
        <text>a 5'-end adenosine-5'-diphospho-5'-2'-deoxyribonucleoside-DNA + H2O = a 5'-end 5'-phospho-2'-deoxyribonucleoside-DNA + AMP + 2 H(+)</text>
        <dbReference type="Rhea" id="RHEA:52128"/>
        <dbReference type="Rhea" id="RHEA-COMP:13180"/>
        <dbReference type="Rhea" id="RHEA-COMP:13181"/>
        <dbReference type="ChEBI" id="CHEBI:15377"/>
        <dbReference type="ChEBI" id="CHEBI:15378"/>
        <dbReference type="ChEBI" id="CHEBI:136412"/>
        <dbReference type="ChEBI" id="CHEBI:136413"/>
        <dbReference type="ChEBI" id="CHEBI:456215"/>
        <dbReference type="EC" id="3.6.1.71"/>
    </reaction>
</comment>
<comment type="catalytic activity">
    <reaction evidence="3">
        <text>a 5'-end adenosine-5'-diphospho-5'-ribonucleoside-2'-deoxyribonucleotide-DNA + H2O = a 5'-end 5'-phospho-ribonucleoside-2'-deoxyribonucleotide-DNA + AMP + 2 H(+)</text>
        <dbReference type="Rhea" id="RHEA:52132"/>
        <dbReference type="Rhea" id="RHEA-COMP:13182"/>
        <dbReference type="Rhea" id="RHEA-COMP:13183"/>
        <dbReference type="ChEBI" id="CHEBI:15377"/>
        <dbReference type="ChEBI" id="CHEBI:15378"/>
        <dbReference type="ChEBI" id="CHEBI:136414"/>
        <dbReference type="ChEBI" id="CHEBI:136415"/>
        <dbReference type="ChEBI" id="CHEBI:456215"/>
        <dbReference type="EC" id="3.6.1.71"/>
    </reaction>
</comment>
<comment type="catalytic activity">
    <reaction evidence="5">
        <text>a 3'-end 2'-deoxyribonucleotide-3'-diphospho-5'-guanosine-DNA + H2O = a 3'-end 2'-deoxyribonucleotide 3'-phosphate-DNA + GMP + 2 H(+)</text>
        <dbReference type="Rhea" id="RHEA:52140"/>
        <dbReference type="Rhea" id="RHEA-COMP:13186"/>
        <dbReference type="Rhea" id="RHEA-COMP:13187"/>
        <dbReference type="ChEBI" id="CHEBI:15377"/>
        <dbReference type="ChEBI" id="CHEBI:15378"/>
        <dbReference type="ChEBI" id="CHEBI:58115"/>
        <dbReference type="ChEBI" id="CHEBI:136419"/>
        <dbReference type="ChEBI" id="CHEBI:136420"/>
        <dbReference type="EC" id="3.6.1.72"/>
    </reaction>
</comment>
<comment type="subunit">
    <text evidence="2 3">Monomer.</text>
</comment>
<comment type="subcellular location">
    <subcellularLocation>
        <location evidence="1">Nucleus</location>
    </subcellularLocation>
    <subcellularLocation>
        <location evidence="1">Cytoplasm</location>
    </subcellularLocation>
</comment>
<reference key="1">
    <citation type="journal article" date="2002" name="Nature">
        <title>The genome sequence of Schizosaccharomyces pombe.</title>
        <authorList>
            <person name="Wood V."/>
            <person name="Gwilliam R."/>
            <person name="Rajandream M.A."/>
            <person name="Lyne M.H."/>
            <person name="Lyne R."/>
            <person name="Stewart A."/>
            <person name="Sgouros J.G."/>
            <person name="Peat N."/>
            <person name="Hayles J."/>
            <person name="Baker S.G."/>
            <person name="Basham D."/>
            <person name="Bowman S."/>
            <person name="Brooks K."/>
            <person name="Brown D."/>
            <person name="Brown S."/>
            <person name="Chillingworth T."/>
            <person name="Churcher C.M."/>
            <person name="Collins M."/>
            <person name="Connor R."/>
            <person name="Cronin A."/>
            <person name="Davis P."/>
            <person name="Feltwell T."/>
            <person name="Fraser A."/>
            <person name="Gentles S."/>
            <person name="Goble A."/>
            <person name="Hamlin N."/>
            <person name="Harris D.E."/>
            <person name="Hidalgo J."/>
            <person name="Hodgson G."/>
            <person name="Holroyd S."/>
            <person name="Hornsby T."/>
            <person name="Howarth S."/>
            <person name="Huckle E.J."/>
            <person name="Hunt S."/>
            <person name="Jagels K."/>
            <person name="James K.D."/>
            <person name="Jones L."/>
            <person name="Jones M."/>
            <person name="Leather S."/>
            <person name="McDonald S."/>
            <person name="McLean J."/>
            <person name="Mooney P."/>
            <person name="Moule S."/>
            <person name="Mungall K.L."/>
            <person name="Murphy L.D."/>
            <person name="Niblett D."/>
            <person name="Odell C."/>
            <person name="Oliver K."/>
            <person name="O'Neil S."/>
            <person name="Pearson D."/>
            <person name="Quail M.A."/>
            <person name="Rabbinowitsch E."/>
            <person name="Rutherford K.M."/>
            <person name="Rutter S."/>
            <person name="Saunders D."/>
            <person name="Seeger K."/>
            <person name="Sharp S."/>
            <person name="Skelton J."/>
            <person name="Simmonds M.N."/>
            <person name="Squares R."/>
            <person name="Squares S."/>
            <person name="Stevens K."/>
            <person name="Taylor K."/>
            <person name="Taylor R.G."/>
            <person name="Tivey A."/>
            <person name="Walsh S.V."/>
            <person name="Warren T."/>
            <person name="Whitehead S."/>
            <person name="Woodward J.R."/>
            <person name="Volckaert G."/>
            <person name="Aert R."/>
            <person name="Robben J."/>
            <person name="Grymonprez B."/>
            <person name="Weltjens I."/>
            <person name="Vanstreels E."/>
            <person name="Rieger M."/>
            <person name="Schaefer M."/>
            <person name="Mueller-Auer S."/>
            <person name="Gabel C."/>
            <person name="Fuchs M."/>
            <person name="Duesterhoeft A."/>
            <person name="Fritzc C."/>
            <person name="Holzer E."/>
            <person name="Moestl D."/>
            <person name="Hilbert H."/>
            <person name="Borzym K."/>
            <person name="Langer I."/>
            <person name="Beck A."/>
            <person name="Lehrach H."/>
            <person name="Reinhardt R."/>
            <person name="Pohl T.M."/>
            <person name="Eger P."/>
            <person name="Zimmermann W."/>
            <person name="Wedler H."/>
            <person name="Wambutt R."/>
            <person name="Purnelle B."/>
            <person name="Goffeau A."/>
            <person name="Cadieu E."/>
            <person name="Dreano S."/>
            <person name="Gloux S."/>
            <person name="Lelaure V."/>
            <person name="Mottier S."/>
            <person name="Galibert F."/>
            <person name="Aves S.J."/>
            <person name="Xiang Z."/>
            <person name="Hunt C."/>
            <person name="Moore K."/>
            <person name="Hurst S.M."/>
            <person name="Lucas M."/>
            <person name="Rochet M."/>
            <person name="Gaillardin C."/>
            <person name="Tallada V.A."/>
            <person name="Garzon A."/>
            <person name="Thode G."/>
            <person name="Daga R.R."/>
            <person name="Cruzado L."/>
            <person name="Jimenez J."/>
            <person name="Sanchez M."/>
            <person name="del Rey F."/>
            <person name="Benito J."/>
            <person name="Dominguez A."/>
            <person name="Revuelta J.L."/>
            <person name="Moreno S."/>
            <person name="Armstrong J."/>
            <person name="Forsburg S.L."/>
            <person name="Cerutti L."/>
            <person name="Lowe T."/>
            <person name="McCombie W.R."/>
            <person name="Paulsen I."/>
            <person name="Potashkin J."/>
            <person name="Shpakovski G.V."/>
            <person name="Ussery D."/>
            <person name="Barrell B.G."/>
            <person name="Nurse P."/>
        </authorList>
    </citation>
    <scope>NUCLEOTIDE SEQUENCE [LARGE SCALE GENOMIC DNA]</scope>
    <source>
        <strain>972 / ATCC 24843</strain>
    </source>
</reference>
<reference key="2">
    <citation type="journal article" date="2006" name="Nat. Biotechnol.">
        <title>ORFeome cloning and global analysis of protein localization in the fission yeast Schizosaccharomyces pombe.</title>
        <authorList>
            <person name="Matsuyama A."/>
            <person name="Arai R."/>
            <person name="Yashiroda Y."/>
            <person name="Shirai A."/>
            <person name="Kamata A."/>
            <person name="Sekido S."/>
            <person name="Kobayashi Y."/>
            <person name="Hashimoto A."/>
            <person name="Hamamoto M."/>
            <person name="Hiraoka Y."/>
            <person name="Horinouchi S."/>
            <person name="Yoshida M."/>
        </authorList>
    </citation>
    <scope>SUBCELLULAR LOCATION [LARGE SCALE ANALYSIS]</scope>
</reference>
<reference key="3">
    <citation type="journal article" date="2014" name="Nature">
        <title>Aprataxin resolves adenylated RNA-DNA junctions to maintain genome integrity.</title>
        <authorList>
            <person name="Tumbale P."/>
            <person name="Williams J.S."/>
            <person name="Schellenberg M.J."/>
            <person name="Kunkel T.A."/>
            <person name="Williams R.S."/>
        </authorList>
    </citation>
    <scope>FUNCTION</scope>
    <scope>CATALYTIC ACTIVITY</scope>
</reference>
<reference evidence="13" key="4">
    <citation type="journal article" date="2011" name="Nat. Struct. Mol. Biol.">
        <title>Structure of an aprataxin-DNA complex with insights into AOA1 neurodegenerative disease.</title>
        <authorList>
            <person name="Tumbale P."/>
            <person name="Appel C.D."/>
            <person name="Kraehenbuehl R."/>
            <person name="Robertson P.D."/>
            <person name="Williams J.S."/>
            <person name="Krahn J."/>
            <person name="Ahel I."/>
            <person name="Williams R.S."/>
        </authorList>
    </citation>
    <scope>X-RAY CRYSTALLOGRAPHY (2.35 ANGSTROMS) OF 31-232 IN COMPLEX WITH ZINC IONS AND SUBSTRATE DNA</scope>
    <scope>FUNCTION</scope>
    <scope>CATALYTIC ACTIVITY</scope>
    <scope>ACTIVE SITE</scope>
    <scope>SUBUNIT</scope>
    <scope>MUTAGENESIS OF PHE-65; LYS-67; HIS-138; SER-142; HIS-147; LYS-161; HIS-165 AND SER-168</scope>
</reference>
<reference evidence="10 11 12" key="5">
    <citation type="journal article" date="2011" name="Nat. Struct. Mol. Biol.">
        <title>Crystal structures of aprataxin ortholog Hnt3 reveal the mechanism for reversal of 5'-adenylated DNA.</title>
        <authorList>
            <person name="Gong Y."/>
            <person name="Zhu D."/>
            <person name="Ding J."/>
            <person name="Dou C.N."/>
            <person name="Ren X."/>
            <person name="Gu L."/>
            <person name="Jiang T."/>
            <person name="Wang D.C."/>
        </authorList>
    </citation>
    <scope>X-RAY CRYSTALLOGRAPHY (1.80 ANGSTROMS) OF 33-232 IN COMPLEXES WITH ZINC IONS AND SUBSTRATE DNA</scope>
    <scope>SUBUNIT</scope>
    <scope>MUTAGENESIS OF PHE-34; CYS-130; HIS-138; SER-142 AND LYS-161</scope>
</reference>
<reference evidence="14 15" key="6">
    <citation type="journal article" date="2015" name="Nucleic Acids Res.">
        <title>DNA3'pp5'G de-capping activity of aprataxin: effect of cap nucleoside analogs and structural basis for guanosine recognition.</title>
        <authorList>
            <person name="Chauleau M."/>
            <person name="Jacewicz A."/>
            <person name="Shuman S."/>
        </authorList>
    </citation>
    <scope>X-RAY CRYSTALLOGRAPHY (1.50 ANGSTROMS) OF 33-232 IN COMPLEXES WITH ZINC IONS; GMP AND SUBSTRATE DNA</scope>
    <scope>CATALYTIC ACTIVITY</scope>
    <scope>FUNCTION</scope>
    <scope>MUTAGENESIS OF TYR-41; ASP-63; HIS-147 AND HIS-149</scope>
    <scope>ACTIVE SITE</scope>
</reference>